<proteinExistence type="inferred from homology"/>
<keyword id="KW-0963">Cytoplasm</keyword>
<keyword id="KW-0460">Magnesium</keyword>
<keyword id="KW-0479">Metal-binding</keyword>
<keyword id="KW-0548">Nucleotidyltransferase</keyword>
<keyword id="KW-0694">RNA-binding</keyword>
<keyword id="KW-0808">Transferase</keyword>
<feature type="chain" id="PRO_0000329848" description="Polyribonucleotide nucleotidyltransferase">
    <location>
        <begin position="1"/>
        <end position="711"/>
    </location>
</feature>
<feature type="domain" description="KH" evidence="1">
    <location>
        <begin position="553"/>
        <end position="612"/>
    </location>
</feature>
<feature type="domain" description="S1 motif" evidence="1">
    <location>
        <begin position="622"/>
        <end position="690"/>
    </location>
</feature>
<feature type="region of interest" description="Disordered" evidence="2">
    <location>
        <begin position="689"/>
        <end position="711"/>
    </location>
</feature>
<feature type="compositionally biased region" description="Low complexity" evidence="2">
    <location>
        <begin position="694"/>
        <end position="711"/>
    </location>
</feature>
<feature type="binding site" evidence="1">
    <location>
        <position position="486"/>
    </location>
    <ligand>
        <name>Mg(2+)</name>
        <dbReference type="ChEBI" id="CHEBI:18420"/>
    </ligand>
</feature>
<feature type="binding site" evidence="1">
    <location>
        <position position="492"/>
    </location>
    <ligand>
        <name>Mg(2+)</name>
        <dbReference type="ChEBI" id="CHEBI:18420"/>
    </ligand>
</feature>
<evidence type="ECO:0000255" key="1">
    <source>
        <dbReference type="HAMAP-Rule" id="MF_01595"/>
    </source>
</evidence>
<evidence type="ECO:0000256" key="2">
    <source>
        <dbReference type="SAM" id="MobiDB-lite"/>
    </source>
</evidence>
<evidence type="ECO:0000305" key="3"/>
<organism>
    <name type="scientific">Shigella boydii serotype 4 (strain Sb227)</name>
    <dbReference type="NCBI Taxonomy" id="300268"/>
    <lineage>
        <taxon>Bacteria</taxon>
        <taxon>Pseudomonadati</taxon>
        <taxon>Pseudomonadota</taxon>
        <taxon>Gammaproteobacteria</taxon>
        <taxon>Enterobacterales</taxon>
        <taxon>Enterobacteriaceae</taxon>
        <taxon>Shigella</taxon>
    </lineage>
</organism>
<sequence length="711" mass="77146">MLNPIVRKFQYGQHTVTLETGMMARQATAAVMVSMDDTAVFVTVVGQKKAKPGQDFFPLTVNYQERTYAAGRIPGSFFRREGRPSEGETLIARLIDRPIRPLFPEGFVNEVQVIATVVSVNPQVNPDIVAMIGASAALSLSGIPFNGPIGAARVGYINDQYVLNPTQDELKESKLDLVVAGTEAAVLMVESEAELLSEDQMLGAVVFGHEQQQVVIQNINELVKEAGKPRWDWQPEPVNEALNARVAALAEARLSDAYRITDKQERYAQVDVIKSETIATLLAEDETLDENELGEILHAIEKNVVRSRVLAGEPRIDGREKDMIRGLDVRTGVLPRTHGSALFTRGETQALVTATLGTARDAQVLDELMGERTDTFLFHYNFPPYSVGETGMVGSPKRREIGHGRLAKRSVLAVMPDMDKFPYTVRVVSEITESNGSSSMASVCGASLALMDAGVPIKAAVAGIAMGLVKEGDNYVVLSDILGDEDHLGDMDFKVAGSREGISALQMDIKIEGITKEIMQVALNQAKGARLHILGVMEQAINAPRGDISEFAPRIHTIKINPDKIKDVIGKGGSVIRALTEETGTTIEIEDDGTVKIAATDGEKAKHAIRRIEEITAEIEVGRVYTGKVTRIVDFGAFVAIGGGKEGLVHISQIADKRVEKVTDYLQMGQEVPVKVLEVDRQGRIRLSIKEATEQSQPAAAPEAPAAEQGE</sequence>
<comment type="function">
    <text evidence="1">Involved in mRNA degradation. Catalyzes the phosphorolysis of single-stranded polyribonucleotides processively in the 3'- to 5'-direction.</text>
</comment>
<comment type="catalytic activity">
    <reaction evidence="1">
        <text>RNA(n+1) + phosphate = RNA(n) + a ribonucleoside 5'-diphosphate</text>
        <dbReference type="Rhea" id="RHEA:22096"/>
        <dbReference type="Rhea" id="RHEA-COMP:14527"/>
        <dbReference type="Rhea" id="RHEA-COMP:17342"/>
        <dbReference type="ChEBI" id="CHEBI:43474"/>
        <dbReference type="ChEBI" id="CHEBI:57930"/>
        <dbReference type="ChEBI" id="CHEBI:140395"/>
        <dbReference type="EC" id="2.7.7.8"/>
    </reaction>
</comment>
<comment type="cofactor">
    <cofactor evidence="1">
        <name>Mg(2+)</name>
        <dbReference type="ChEBI" id="CHEBI:18420"/>
    </cofactor>
</comment>
<comment type="subunit">
    <text evidence="1">Component of the RNA degradosome, which is a multiprotein complex involved in RNA processing and mRNA degradation.</text>
</comment>
<comment type="subcellular location">
    <subcellularLocation>
        <location evidence="1">Cytoplasm</location>
    </subcellularLocation>
</comment>
<comment type="similarity">
    <text evidence="1">Belongs to the polyribonucleotide nucleotidyltransferase family.</text>
</comment>
<comment type="sequence caution" evidence="3">
    <conflict type="erroneous initiation">
        <sequence resource="EMBL-CDS" id="ABB67715"/>
    </conflict>
</comment>
<protein>
    <recommendedName>
        <fullName evidence="1">Polyribonucleotide nucleotidyltransferase</fullName>
        <ecNumber evidence="1">2.7.7.8</ecNumber>
    </recommendedName>
    <alternativeName>
        <fullName evidence="1">Polynucleotide phosphorylase</fullName>
        <shortName evidence="1">PNPase</shortName>
    </alternativeName>
</protein>
<name>PNP_SHIBS</name>
<gene>
    <name evidence="1" type="primary">pnp</name>
    <name type="ordered locus">SBO_3218</name>
</gene>
<dbReference type="EC" id="2.7.7.8" evidence="1"/>
<dbReference type="EMBL" id="CP000036">
    <property type="protein sequence ID" value="ABB67715.1"/>
    <property type="status" value="ALT_INIT"/>
    <property type="molecule type" value="Genomic_DNA"/>
</dbReference>
<dbReference type="RefSeq" id="WP_005008653.1">
    <property type="nucleotide sequence ID" value="NC_007613.1"/>
</dbReference>
<dbReference type="SMR" id="Q31W43"/>
<dbReference type="KEGG" id="sbo:SBO_3218"/>
<dbReference type="HOGENOM" id="CLU_004217_2_2_6"/>
<dbReference type="Proteomes" id="UP000007067">
    <property type="component" value="Chromosome"/>
</dbReference>
<dbReference type="GO" id="GO:0005829">
    <property type="term" value="C:cytosol"/>
    <property type="evidence" value="ECO:0007669"/>
    <property type="project" value="TreeGrafter"/>
</dbReference>
<dbReference type="GO" id="GO:0000175">
    <property type="term" value="F:3'-5'-RNA exonuclease activity"/>
    <property type="evidence" value="ECO:0007669"/>
    <property type="project" value="TreeGrafter"/>
</dbReference>
<dbReference type="GO" id="GO:0000287">
    <property type="term" value="F:magnesium ion binding"/>
    <property type="evidence" value="ECO:0007669"/>
    <property type="project" value="UniProtKB-UniRule"/>
</dbReference>
<dbReference type="GO" id="GO:0004654">
    <property type="term" value="F:polyribonucleotide nucleotidyltransferase activity"/>
    <property type="evidence" value="ECO:0007669"/>
    <property type="project" value="UniProtKB-UniRule"/>
</dbReference>
<dbReference type="GO" id="GO:0003723">
    <property type="term" value="F:RNA binding"/>
    <property type="evidence" value="ECO:0007669"/>
    <property type="project" value="UniProtKB-UniRule"/>
</dbReference>
<dbReference type="GO" id="GO:0006402">
    <property type="term" value="P:mRNA catabolic process"/>
    <property type="evidence" value="ECO:0007669"/>
    <property type="project" value="UniProtKB-UniRule"/>
</dbReference>
<dbReference type="GO" id="GO:0006396">
    <property type="term" value="P:RNA processing"/>
    <property type="evidence" value="ECO:0007669"/>
    <property type="project" value="InterPro"/>
</dbReference>
<dbReference type="CDD" id="cd02393">
    <property type="entry name" value="KH-I_PNPase"/>
    <property type="match status" value="1"/>
</dbReference>
<dbReference type="CDD" id="cd11363">
    <property type="entry name" value="RNase_PH_PNPase_1"/>
    <property type="match status" value="1"/>
</dbReference>
<dbReference type="CDD" id="cd11364">
    <property type="entry name" value="RNase_PH_PNPase_2"/>
    <property type="match status" value="1"/>
</dbReference>
<dbReference type="CDD" id="cd04472">
    <property type="entry name" value="S1_PNPase"/>
    <property type="match status" value="1"/>
</dbReference>
<dbReference type="FunFam" id="2.40.50.140:FF:000023">
    <property type="entry name" value="Polyribonucleotide nucleotidyltransferase"/>
    <property type="match status" value="1"/>
</dbReference>
<dbReference type="FunFam" id="3.30.1370.10:FF:000001">
    <property type="entry name" value="Polyribonucleotide nucleotidyltransferase"/>
    <property type="match status" value="1"/>
</dbReference>
<dbReference type="FunFam" id="3.30.230.70:FF:000001">
    <property type="entry name" value="Polyribonucleotide nucleotidyltransferase"/>
    <property type="match status" value="1"/>
</dbReference>
<dbReference type="FunFam" id="3.30.230.70:FF:000002">
    <property type="entry name" value="Polyribonucleotide nucleotidyltransferase"/>
    <property type="match status" value="1"/>
</dbReference>
<dbReference type="Gene3D" id="3.30.230.70">
    <property type="entry name" value="GHMP Kinase, N-terminal domain"/>
    <property type="match status" value="2"/>
</dbReference>
<dbReference type="Gene3D" id="3.30.1370.10">
    <property type="entry name" value="K Homology domain, type 1"/>
    <property type="match status" value="1"/>
</dbReference>
<dbReference type="Gene3D" id="2.40.50.140">
    <property type="entry name" value="Nucleic acid-binding proteins"/>
    <property type="match status" value="1"/>
</dbReference>
<dbReference type="HAMAP" id="MF_01595">
    <property type="entry name" value="PNPase"/>
    <property type="match status" value="1"/>
</dbReference>
<dbReference type="InterPro" id="IPR001247">
    <property type="entry name" value="ExoRNase_PH_dom1"/>
</dbReference>
<dbReference type="InterPro" id="IPR015847">
    <property type="entry name" value="ExoRNase_PH_dom2"/>
</dbReference>
<dbReference type="InterPro" id="IPR036345">
    <property type="entry name" value="ExoRNase_PH_dom2_sf"/>
</dbReference>
<dbReference type="InterPro" id="IPR004087">
    <property type="entry name" value="KH_dom"/>
</dbReference>
<dbReference type="InterPro" id="IPR004088">
    <property type="entry name" value="KH_dom_type_1"/>
</dbReference>
<dbReference type="InterPro" id="IPR036612">
    <property type="entry name" value="KH_dom_type_1_sf"/>
</dbReference>
<dbReference type="InterPro" id="IPR012340">
    <property type="entry name" value="NA-bd_OB-fold"/>
</dbReference>
<dbReference type="InterPro" id="IPR012162">
    <property type="entry name" value="PNPase"/>
</dbReference>
<dbReference type="InterPro" id="IPR027408">
    <property type="entry name" value="PNPase/RNase_PH_dom_sf"/>
</dbReference>
<dbReference type="InterPro" id="IPR015848">
    <property type="entry name" value="PNPase_PH_RNA-bd_bac/org-type"/>
</dbReference>
<dbReference type="InterPro" id="IPR036456">
    <property type="entry name" value="PNPase_PH_RNA-bd_sf"/>
</dbReference>
<dbReference type="InterPro" id="IPR020568">
    <property type="entry name" value="Ribosomal_Su5_D2-typ_SF"/>
</dbReference>
<dbReference type="InterPro" id="IPR003029">
    <property type="entry name" value="S1_domain"/>
</dbReference>
<dbReference type="NCBIfam" id="TIGR03591">
    <property type="entry name" value="polynuc_phos"/>
    <property type="match status" value="1"/>
</dbReference>
<dbReference type="NCBIfam" id="NF008805">
    <property type="entry name" value="PRK11824.1"/>
    <property type="match status" value="1"/>
</dbReference>
<dbReference type="PANTHER" id="PTHR11252">
    <property type="entry name" value="POLYRIBONUCLEOTIDE NUCLEOTIDYLTRANSFERASE"/>
    <property type="match status" value="1"/>
</dbReference>
<dbReference type="PANTHER" id="PTHR11252:SF0">
    <property type="entry name" value="POLYRIBONUCLEOTIDE NUCLEOTIDYLTRANSFERASE 1, MITOCHONDRIAL"/>
    <property type="match status" value="1"/>
</dbReference>
<dbReference type="Pfam" id="PF00013">
    <property type="entry name" value="KH_1"/>
    <property type="match status" value="1"/>
</dbReference>
<dbReference type="Pfam" id="PF03726">
    <property type="entry name" value="PNPase"/>
    <property type="match status" value="1"/>
</dbReference>
<dbReference type="Pfam" id="PF01138">
    <property type="entry name" value="RNase_PH"/>
    <property type="match status" value="2"/>
</dbReference>
<dbReference type="Pfam" id="PF03725">
    <property type="entry name" value="RNase_PH_C"/>
    <property type="match status" value="2"/>
</dbReference>
<dbReference type="Pfam" id="PF00575">
    <property type="entry name" value="S1"/>
    <property type="match status" value="1"/>
</dbReference>
<dbReference type="PIRSF" id="PIRSF005499">
    <property type="entry name" value="PNPase"/>
    <property type="match status" value="1"/>
</dbReference>
<dbReference type="SMART" id="SM00322">
    <property type="entry name" value="KH"/>
    <property type="match status" value="1"/>
</dbReference>
<dbReference type="SMART" id="SM00316">
    <property type="entry name" value="S1"/>
    <property type="match status" value="1"/>
</dbReference>
<dbReference type="SUPFAM" id="SSF54791">
    <property type="entry name" value="Eukaryotic type KH-domain (KH-domain type I)"/>
    <property type="match status" value="1"/>
</dbReference>
<dbReference type="SUPFAM" id="SSF50249">
    <property type="entry name" value="Nucleic acid-binding proteins"/>
    <property type="match status" value="1"/>
</dbReference>
<dbReference type="SUPFAM" id="SSF46915">
    <property type="entry name" value="Polynucleotide phosphorylase/guanosine pentaphosphate synthase (PNPase/GPSI), domain 3"/>
    <property type="match status" value="1"/>
</dbReference>
<dbReference type="SUPFAM" id="SSF55666">
    <property type="entry name" value="Ribonuclease PH domain 2-like"/>
    <property type="match status" value="2"/>
</dbReference>
<dbReference type="SUPFAM" id="SSF54211">
    <property type="entry name" value="Ribosomal protein S5 domain 2-like"/>
    <property type="match status" value="2"/>
</dbReference>
<dbReference type="PROSITE" id="PS50084">
    <property type="entry name" value="KH_TYPE_1"/>
    <property type="match status" value="1"/>
</dbReference>
<dbReference type="PROSITE" id="PS50126">
    <property type="entry name" value="S1"/>
    <property type="match status" value="1"/>
</dbReference>
<reference key="1">
    <citation type="journal article" date="2005" name="Nucleic Acids Res.">
        <title>Genome dynamics and diversity of Shigella species, the etiologic agents of bacillary dysentery.</title>
        <authorList>
            <person name="Yang F."/>
            <person name="Yang J."/>
            <person name="Zhang X."/>
            <person name="Chen L."/>
            <person name="Jiang Y."/>
            <person name="Yan Y."/>
            <person name="Tang X."/>
            <person name="Wang J."/>
            <person name="Xiong Z."/>
            <person name="Dong J."/>
            <person name="Xue Y."/>
            <person name="Zhu Y."/>
            <person name="Xu X."/>
            <person name="Sun L."/>
            <person name="Chen S."/>
            <person name="Nie H."/>
            <person name="Peng J."/>
            <person name="Xu J."/>
            <person name="Wang Y."/>
            <person name="Yuan Z."/>
            <person name="Wen Y."/>
            <person name="Yao Z."/>
            <person name="Shen Y."/>
            <person name="Qiang B."/>
            <person name="Hou Y."/>
            <person name="Yu J."/>
            <person name="Jin Q."/>
        </authorList>
    </citation>
    <scope>NUCLEOTIDE SEQUENCE [LARGE SCALE GENOMIC DNA]</scope>
    <source>
        <strain>Sb227</strain>
    </source>
</reference>
<accession>Q31W43</accession>